<gene>
    <name evidence="1" type="primary">xylA</name>
    <name type="ordered locus">Bcen2424_6740</name>
</gene>
<protein>
    <recommendedName>
        <fullName evidence="1">Xylose isomerase</fullName>
        <ecNumber evidence="1">5.3.1.5</ecNumber>
    </recommendedName>
</protein>
<proteinExistence type="inferred from homology"/>
<evidence type="ECO:0000255" key="1">
    <source>
        <dbReference type="HAMAP-Rule" id="MF_00455"/>
    </source>
</evidence>
<feature type="chain" id="PRO_1000026434" description="Xylose isomerase">
    <location>
        <begin position="1"/>
        <end position="440"/>
    </location>
</feature>
<feature type="active site" evidence="1">
    <location>
        <position position="100"/>
    </location>
</feature>
<feature type="active site" evidence="1">
    <location>
        <position position="103"/>
    </location>
</feature>
<feature type="binding site" evidence="1">
    <location>
        <position position="231"/>
    </location>
    <ligand>
        <name>Mg(2+)</name>
        <dbReference type="ChEBI" id="CHEBI:18420"/>
        <label>1</label>
    </ligand>
</feature>
<feature type="binding site" evidence="1">
    <location>
        <position position="267"/>
    </location>
    <ligand>
        <name>Mg(2+)</name>
        <dbReference type="ChEBI" id="CHEBI:18420"/>
        <label>1</label>
    </ligand>
</feature>
<feature type="binding site" evidence="1">
    <location>
        <position position="267"/>
    </location>
    <ligand>
        <name>Mg(2+)</name>
        <dbReference type="ChEBI" id="CHEBI:18420"/>
        <label>2</label>
    </ligand>
</feature>
<feature type="binding site" evidence="1">
    <location>
        <position position="270"/>
    </location>
    <ligand>
        <name>Mg(2+)</name>
        <dbReference type="ChEBI" id="CHEBI:18420"/>
        <label>2</label>
    </ligand>
</feature>
<feature type="binding site" evidence="1">
    <location>
        <position position="295"/>
    </location>
    <ligand>
        <name>Mg(2+)</name>
        <dbReference type="ChEBI" id="CHEBI:18420"/>
        <label>1</label>
    </ligand>
</feature>
<feature type="binding site" evidence="1">
    <location>
        <position position="306"/>
    </location>
    <ligand>
        <name>Mg(2+)</name>
        <dbReference type="ChEBI" id="CHEBI:18420"/>
        <label>2</label>
    </ligand>
</feature>
<feature type="binding site" evidence="1">
    <location>
        <position position="308"/>
    </location>
    <ligand>
        <name>Mg(2+)</name>
        <dbReference type="ChEBI" id="CHEBI:18420"/>
        <label>2</label>
    </ligand>
</feature>
<feature type="binding site" evidence="1">
    <location>
        <position position="338"/>
    </location>
    <ligand>
        <name>Mg(2+)</name>
        <dbReference type="ChEBI" id="CHEBI:18420"/>
        <label>1</label>
    </ligand>
</feature>
<reference key="1">
    <citation type="submission" date="2006-08" db="EMBL/GenBank/DDBJ databases">
        <title>Complete sequence of chromosome 3 of Burkholderia cenocepacia HI2424.</title>
        <authorList>
            <person name="Copeland A."/>
            <person name="Lucas S."/>
            <person name="Lapidus A."/>
            <person name="Barry K."/>
            <person name="Detter J.C."/>
            <person name="Glavina del Rio T."/>
            <person name="Hammon N."/>
            <person name="Israni S."/>
            <person name="Pitluck S."/>
            <person name="Chain P."/>
            <person name="Malfatti S."/>
            <person name="Shin M."/>
            <person name="Vergez L."/>
            <person name="Schmutz J."/>
            <person name="Larimer F."/>
            <person name="Land M."/>
            <person name="Hauser L."/>
            <person name="Kyrpides N."/>
            <person name="Kim E."/>
            <person name="LiPuma J.J."/>
            <person name="Gonzalez C.F."/>
            <person name="Konstantinidis K."/>
            <person name="Tiedje J.M."/>
            <person name="Richardson P."/>
        </authorList>
    </citation>
    <scope>NUCLEOTIDE SEQUENCE [LARGE SCALE GENOMIC DNA]</scope>
    <source>
        <strain>HI2424</strain>
    </source>
</reference>
<dbReference type="EC" id="5.3.1.5" evidence="1"/>
<dbReference type="EMBL" id="CP000460">
    <property type="protein sequence ID" value="ABK13469.1"/>
    <property type="molecule type" value="Genomic_DNA"/>
</dbReference>
<dbReference type="RefSeq" id="WP_011549898.1">
    <property type="nucleotide sequence ID" value="NC_008544.1"/>
</dbReference>
<dbReference type="SMR" id="A0KE56"/>
<dbReference type="KEGG" id="bch:Bcen2424_6740"/>
<dbReference type="HOGENOM" id="CLU_037261_1_0_4"/>
<dbReference type="GO" id="GO:0005737">
    <property type="term" value="C:cytoplasm"/>
    <property type="evidence" value="ECO:0007669"/>
    <property type="project" value="UniProtKB-SubCell"/>
</dbReference>
<dbReference type="GO" id="GO:0000287">
    <property type="term" value="F:magnesium ion binding"/>
    <property type="evidence" value="ECO:0007669"/>
    <property type="project" value="UniProtKB-UniRule"/>
</dbReference>
<dbReference type="GO" id="GO:0009045">
    <property type="term" value="F:xylose isomerase activity"/>
    <property type="evidence" value="ECO:0007669"/>
    <property type="project" value="UniProtKB-UniRule"/>
</dbReference>
<dbReference type="GO" id="GO:0042732">
    <property type="term" value="P:D-xylose metabolic process"/>
    <property type="evidence" value="ECO:0007669"/>
    <property type="project" value="UniProtKB-UniRule"/>
</dbReference>
<dbReference type="FunFam" id="3.20.20.150:FF:000002">
    <property type="entry name" value="Xylose isomerase"/>
    <property type="match status" value="1"/>
</dbReference>
<dbReference type="Gene3D" id="3.20.20.150">
    <property type="entry name" value="Divalent-metal-dependent TIM barrel enzymes"/>
    <property type="match status" value="1"/>
</dbReference>
<dbReference type="HAMAP" id="MF_00455">
    <property type="entry name" value="Xylose_isom_A"/>
    <property type="match status" value="1"/>
</dbReference>
<dbReference type="InterPro" id="IPR036237">
    <property type="entry name" value="Xyl_isomerase-like_sf"/>
</dbReference>
<dbReference type="InterPro" id="IPR013452">
    <property type="entry name" value="Xylose_isom_bac"/>
</dbReference>
<dbReference type="InterPro" id="IPR001998">
    <property type="entry name" value="Xylose_isomerase"/>
</dbReference>
<dbReference type="NCBIfam" id="NF003998">
    <property type="entry name" value="PRK05474.1"/>
    <property type="match status" value="1"/>
</dbReference>
<dbReference type="NCBIfam" id="TIGR02630">
    <property type="entry name" value="xylose_isom_A"/>
    <property type="match status" value="1"/>
</dbReference>
<dbReference type="PANTHER" id="PTHR48408">
    <property type="match status" value="1"/>
</dbReference>
<dbReference type="PANTHER" id="PTHR48408:SF1">
    <property type="entry name" value="XYLOSE ISOMERASE"/>
    <property type="match status" value="1"/>
</dbReference>
<dbReference type="PRINTS" id="PR00688">
    <property type="entry name" value="XYLOSISMRASE"/>
</dbReference>
<dbReference type="SUPFAM" id="SSF51658">
    <property type="entry name" value="Xylose isomerase-like"/>
    <property type="match status" value="1"/>
</dbReference>
<dbReference type="PROSITE" id="PS51415">
    <property type="entry name" value="XYLOSE_ISOMERASE"/>
    <property type="match status" value="1"/>
</dbReference>
<keyword id="KW-0119">Carbohydrate metabolism</keyword>
<keyword id="KW-0963">Cytoplasm</keyword>
<keyword id="KW-0413">Isomerase</keyword>
<keyword id="KW-0460">Magnesium</keyword>
<keyword id="KW-0479">Metal-binding</keyword>
<keyword id="KW-0859">Xylose metabolism</keyword>
<accession>A0KE56</accession>
<organism>
    <name type="scientific">Burkholderia cenocepacia (strain HI2424)</name>
    <dbReference type="NCBI Taxonomy" id="331272"/>
    <lineage>
        <taxon>Bacteria</taxon>
        <taxon>Pseudomonadati</taxon>
        <taxon>Pseudomonadota</taxon>
        <taxon>Betaproteobacteria</taxon>
        <taxon>Burkholderiales</taxon>
        <taxon>Burkholderiaceae</taxon>
        <taxon>Burkholderia</taxon>
        <taxon>Burkholderia cepacia complex</taxon>
    </lineage>
</organism>
<sequence>MSYFEHIPAIRYEGPQSDNPLAYHHYDPDKRVLGKTLAEHLRIAVCYWHTFVWPGHDIFGQGAFQRPWQQPGDALERARQKADAAFEFFTKLGTPFYTFHDTDVAPEGDSLRDYAANFARMVDYLGERQQASGVRLLWGTANLFSHPRFAAGAATNPNPDVFAWAATQVCHALDATHRLGGENYVLWGGREGYETLLNTDLKRERDQFARFLSMVVEHKHRIGFKGALLIEPKPQEPTKHQYDYDVATVHGFLVQYGLQNEIRVNIEANHATLAGHSFHHEIANAFALGVFGSVDANRGDPQNGWDTDQFPNSVEELTLAFYEILRHGGFTTGGMNFDAKVRRQSIDPEDLFYGHVGAIDVLALALERAAVLVENDRLDALRRQRYAQWDDAFGRKILSGGYTLESLAADALARGVNPRHASGAQERLENIVNQAIYGLR</sequence>
<name>XYLA_BURCH</name>
<comment type="catalytic activity">
    <reaction evidence="1">
        <text>alpha-D-xylose = alpha-D-xylulofuranose</text>
        <dbReference type="Rhea" id="RHEA:22816"/>
        <dbReference type="ChEBI" id="CHEBI:28518"/>
        <dbReference type="ChEBI" id="CHEBI:188998"/>
        <dbReference type="EC" id="5.3.1.5"/>
    </reaction>
</comment>
<comment type="cofactor">
    <cofactor evidence="1">
        <name>Mg(2+)</name>
        <dbReference type="ChEBI" id="CHEBI:18420"/>
    </cofactor>
    <text evidence="1">Binds 2 magnesium ions per subunit.</text>
</comment>
<comment type="subunit">
    <text evidence="1">Homotetramer.</text>
</comment>
<comment type="subcellular location">
    <subcellularLocation>
        <location evidence="1">Cytoplasm</location>
    </subcellularLocation>
</comment>
<comment type="similarity">
    <text evidence="1">Belongs to the xylose isomerase family.</text>
</comment>